<proteinExistence type="inferred from homology"/>
<organism>
    <name type="scientific">Bacillus cereus (strain G9842)</name>
    <dbReference type="NCBI Taxonomy" id="405531"/>
    <lineage>
        <taxon>Bacteria</taxon>
        <taxon>Bacillati</taxon>
        <taxon>Bacillota</taxon>
        <taxon>Bacilli</taxon>
        <taxon>Bacillales</taxon>
        <taxon>Bacillaceae</taxon>
        <taxon>Bacillus</taxon>
        <taxon>Bacillus cereus group</taxon>
    </lineage>
</organism>
<dbReference type="EC" id="4.2.1.126" evidence="1"/>
<dbReference type="EMBL" id="CP001186">
    <property type="protein sequence ID" value="ACK93585.1"/>
    <property type="molecule type" value="Genomic_DNA"/>
</dbReference>
<dbReference type="RefSeq" id="WP_000892354.1">
    <property type="nucleotide sequence ID" value="NC_011772.1"/>
</dbReference>
<dbReference type="SMR" id="B7II82"/>
<dbReference type="KEGG" id="bcg:BCG9842_B4459"/>
<dbReference type="HOGENOM" id="CLU_049049_1_1_9"/>
<dbReference type="UniPathway" id="UPA00342"/>
<dbReference type="Proteomes" id="UP000006744">
    <property type="component" value="Chromosome"/>
</dbReference>
<dbReference type="GO" id="GO:0097367">
    <property type="term" value="F:carbohydrate derivative binding"/>
    <property type="evidence" value="ECO:0007669"/>
    <property type="project" value="InterPro"/>
</dbReference>
<dbReference type="GO" id="GO:0016835">
    <property type="term" value="F:carbon-oxygen lyase activity"/>
    <property type="evidence" value="ECO:0007669"/>
    <property type="project" value="UniProtKB-UniRule"/>
</dbReference>
<dbReference type="GO" id="GO:0016803">
    <property type="term" value="F:ether hydrolase activity"/>
    <property type="evidence" value="ECO:0007669"/>
    <property type="project" value="TreeGrafter"/>
</dbReference>
<dbReference type="GO" id="GO:0046348">
    <property type="term" value="P:amino sugar catabolic process"/>
    <property type="evidence" value="ECO:0007669"/>
    <property type="project" value="InterPro"/>
</dbReference>
<dbReference type="GO" id="GO:0097173">
    <property type="term" value="P:N-acetylmuramic acid catabolic process"/>
    <property type="evidence" value="ECO:0007669"/>
    <property type="project" value="UniProtKB-UniPathway"/>
</dbReference>
<dbReference type="GO" id="GO:0009254">
    <property type="term" value="P:peptidoglycan turnover"/>
    <property type="evidence" value="ECO:0007669"/>
    <property type="project" value="TreeGrafter"/>
</dbReference>
<dbReference type="CDD" id="cd05007">
    <property type="entry name" value="SIS_Etherase"/>
    <property type="match status" value="1"/>
</dbReference>
<dbReference type="FunFam" id="1.10.8.1080:FF:000001">
    <property type="entry name" value="N-acetylmuramic acid 6-phosphate etherase"/>
    <property type="match status" value="1"/>
</dbReference>
<dbReference type="FunFam" id="3.40.50.10490:FF:000014">
    <property type="entry name" value="N-acetylmuramic acid 6-phosphate etherase"/>
    <property type="match status" value="1"/>
</dbReference>
<dbReference type="Gene3D" id="1.10.8.1080">
    <property type="match status" value="1"/>
</dbReference>
<dbReference type="Gene3D" id="3.40.50.10490">
    <property type="entry name" value="Glucose-6-phosphate isomerase like protein, domain 1"/>
    <property type="match status" value="1"/>
</dbReference>
<dbReference type="HAMAP" id="MF_00068">
    <property type="entry name" value="MurQ"/>
    <property type="match status" value="1"/>
</dbReference>
<dbReference type="InterPro" id="IPR005488">
    <property type="entry name" value="Etherase_MurQ"/>
</dbReference>
<dbReference type="InterPro" id="IPR005486">
    <property type="entry name" value="Glucokinase_regulatory_CS"/>
</dbReference>
<dbReference type="InterPro" id="IPR040190">
    <property type="entry name" value="MURQ/GCKR"/>
</dbReference>
<dbReference type="InterPro" id="IPR001347">
    <property type="entry name" value="SIS_dom"/>
</dbReference>
<dbReference type="InterPro" id="IPR046348">
    <property type="entry name" value="SIS_dom_sf"/>
</dbReference>
<dbReference type="NCBIfam" id="TIGR00274">
    <property type="entry name" value="N-acetylmuramic acid 6-phosphate etherase"/>
    <property type="match status" value="1"/>
</dbReference>
<dbReference type="NCBIfam" id="NF003915">
    <property type="entry name" value="PRK05441.1"/>
    <property type="match status" value="1"/>
</dbReference>
<dbReference type="NCBIfam" id="NF009222">
    <property type="entry name" value="PRK12570.1"/>
    <property type="match status" value="1"/>
</dbReference>
<dbReference type="PANTHER" id="PTHR10088">
    <property type="entry name" value="GLUCOKINASE REGULATORY PROTEIN"/>
    <property type="match status" value="1"/>
</dbReference>
<dbReference type="PANTHER" id="PTHR10088:SF4">
    <property type="entry name" value="GLUCOKINASE REGULATORY PROTEIN"/>
    <property type="match status" value="1"/>
</dbReference>
<dbReference type="Pfam" id="PF22645">
    <property type="entry name" value="GKRP_SIS_N"/>
    <property type="match status" value="1"/>
</dbReference>
<dbReference type="SUPFAM" id="SSF53697">
    <property type="entry name" value="SIS domain"/>
    <property type="match status" value="1"/>
</dbReference>
<dbReference type="PROSITE" id="PS01272">
    <property type="entry name" value="GCKR"/>
    <property type="match status" value="1"/>
</dbReference>
<dbReference type="PROSITE" id="PS51464">
    <property type="entry name" value="SIS"/>
    <property type="match status" value="1"/>
</dbReference>
<evidence type="ECO:0000255" key="1">
    <source>
        <dbReference type="HAMAP-Rule" id="MF_00068"/>
    </source>
</evidence>
<sequence length="294" mass="32012">MLENLSTEHRNEKTMNLDEMSIKEVLQSMNEEDRTVALAVEKEIEQIEKVVQTVIKSFEEEGRLIYIGAGTSGRLGILDAVECPPTFGTDDKMVQGYIAGGLKAFTKAVEGAEDREELAEEDLKSIGLNEKDTVIGIAASGRTPYVIGGLKYAQSVGASTASISCNKNAEISKYAKLNVEVETGAEILTGSTRLKAGTAQKLVLNMISTASMIGVGKVYKNLMVDVQSTNEKLVERSKRIIMEATGASYEVAAEYYEKAERNVKAAIVMVLLQCEYGEALEKLKYAKGFVKKAL</sequence>
<gene>
    <name evidence="1" type="primary">murQ</name>
    <name type="ordered locus">BCG9842_B4459</name>
</gene>
<feature type="chain" id="PRO_1000116987" description="N-acetylmuramic acid 6-phosphate etherase">
    <location>
        <begin position="1"/>
        <end position="294"/>
    </location>
</feature>
<feature type="domain" description="SIS" evidence="1">
    <location>
        <begin position="54"/>
        <end position="217"/>
    </location>
</feature>
<feature type="active site" description="Proton donor" evidence="1">
    <location>
        <position position="82"/>
    </location>
</feature>
<feature type="active site" evidence="1">
    <location>
        <position position="113"/>
    </location>
</feature>
<name>MURQ_BACC2</name>
<accession>B7II82</accession>
<protein>
    <recommendedName>
        <fullName evidence="1">N-acetylmuramic acid 6-phosphate etherase</fullName>
        <shortName evidence="1">MurNAc-6-P etherase</shortName>
        <ecNumber evidence="1">4.2.1.126</ecNumber>
    </recommendedName>
    <alternativeName>
        <fullName evidence="1">N-acetylmuramic acid 6-phosphate hydrolase</fullName>
    </alternativeName>
    <alternativeName>
        <fullName evidence="1">N-acetylmuramic acid 6-phosphate lyase</fullName>
    </alternativeName>
</protein>
<keyword id="KW-0119">Carbohydrate metabolism</keyword>
<keyword id="KW-0456">Lyase</keyword>
<comment type="function">
    <text evidence="1">Specifically catalyzes the cleavage of the D-lactyl ether substituent of MurNAc 6-phosphate, producing GlcNAc 6-phosphate and D-lactate.</text>
</comment>
<comment type="catalytic activity">
    <reaction evidence="1">
        <text>N-acetyl-D-muramate 6-phosphate + H2O = N-acetyl-D-glucosamine 6-phosphate + (R)-lactate</text>
        <dbReference type="Rhea" id="RHEA:26410"/>
        <dbReference type="ChEBI" id="CHEBI:15377"/>
        <dbReference type="ChEBI" id="CHEBI:16004"/>
        <dbReference type="ChEBI" id="CHEBI:57513"/>
        <dbReference type="ChEBI" id="CHEBI:58722"/>
        <dbReference type="EC" id="4.2.1.126"/>
    </reaction>
</comment>
<comment type="pathway">
    <text evidence="1">Amino-sugar metabolism; N-acetylmuramate degradation.</text>
</comment>
<comment type="subunit">
    <text evidence="1">Homodimer.</text>
</comment>
<comment type="miscellaneous">
    <text evidence="1">A lyase-type mechanism (elimination/hydration) is suggested for the cleavage of the lactyl ether bond of MurNAc 6-phosphate, with the formation of an alpha,beta-unsaturated aldehyde intermediate with (E)-stereochemistry, followed by the syn addition of water to give product.</text>
</comment>
<comment type="similarity">
    <text evidence="1">Belongs to the GCKR-like family. MurNAc-6-P etherase subfamily.</text>
</comment>
<reference key="1">
    <citation type="submission" date="2008-10" db="EMBL/GenBank/DDBJ databases">
        <title>Genome sequence of Bacillus cereus G9842.</title>
        <authorList>
            <person name="Dodson R.J."/>
            <person name="Durkin A.S."/>
            <person name="Rosovitz M.J."/>
            <person name="Rasko D.A."/>
            <person name="Hoffmaster A."/>
            <person name="Ravel J."/>
            <person name="Sutton G."/>
        </authorList>
    </citation>
    <scope>NUCLEOTIDE SEQUENCE [LARGE SCALE GENOMIC DNA]</scope>
    <source>
        <strain>G9842</strain>
    </source>
</reference>